<accession>A9M1N1</accession>
<proteinExistence type="inferred from homology"/>
<comment type="function">
    <text evidence="1">Promotes RNA polymerase assembly. Latches the N- and C-terminal regions of the beta' subunit thereby facilitating its interaction with the beta and alpha subunits.</text>
</comment>
<comment type="catalytic activity">
    <reaction evidence="1">
        <text>RNA(n) + a ribonucleoside 5'-triphosphate = RNA(n+1) + diphosphate</text>
        <dbReference type="Rhea" id="RHEA:21248"/>
        <dbReference type="Rhea" id="RHEA-COMP:14527"/>
        <dbReference type="Rhea" id="RHEA-COMP:17342"/>
        <dbReference type="ChEBI" id="CHEBI:33019"/>
        <dbReference type="ChEBI" id="CHEBI:61557"/>
        <dbReference type="ChEBI" id="CHEBI:140395"/>
        <dbReference type="EC" id="2.7.7.6"/>
    </reaction>
</comment>
<comment type="subunit">
    <text evidence="1">The RNAP catalytic core consists of 2 alpha, 1 beta, 1 beta' and 1 omega subunit. When a sigma factor is associated with the core the holoenzyme is formed, which can initiate transcription.</text>
</comment>
<comment type="similarity">
    <text evidence="1">Belongs to the RNA polymerase subunit omega family.</text>
</comment>
<name>RPOZ_NEIM0</name>
<organism>
    <name type="scientific">Neisseria meningitidis serogroup C (strain 053442)</name>
    <dbReference type="NCBI Taxonomy" id="374833"/>
    <lineage>
        <taxon>Bacteria</taxon>
        <taxon>Pseudomonadati</taxon>
        <taxon>Pseudomonadota</taxon>
        <taxon>Betaproteobacteria</taxon>
        <taxon>Neisseriales</taxon>
        <taxon>Neisseriaceae</taxon>
        <taxon>Neisseria</taxon>
    </lineage>
</organism>
<sequence>MARITTEDCTGKISNHFDLTLVAARRARQLENGNTPLVDDARNNKPTVTALREIAAGHIGTELLTRNK</sequence>
<gene>
    <name evidence="1" type="primary">rpoZ</name>
    <name type="ordered locus">NMCC_1570</name>
</gene>
<reference key="1">
    <citation type="journal article" date="2008" name="Genomics">
        <title>Characterization of ST-4821 complex, a unique Neisseria meningitidis clone.</title>
        <authorList>
            <person name="Peng J."/>
            <person name="Yang L."/>
            <person name="Yang F."/>
            <person name="Yang J."/>
            <person name="Yan Y."/>
            <person name="Nie H."/>
            <person name="Zhang X."/>
            <person name="Xiong Z."/>
            <person name="Jiang Y."/>
            <person name="Cheng F."/>
            <person name="Xu X."/>
            <person name="Chen S."/>
            <person name="Sun L."/>
            <person name="Li W."/>
            <person name="Shen Y."/>
            <person name="Shao Z."/>
            <person name="Liang X."/>
            <person name="Xu J."/>
            <person name="Jin Q."/>
        </authorList>
    </citation>
    <scope>NUCLEOTIDE SEQUENCE [LARGE SCALE GENOMIC DNA]</scope>
    <source>
        <strain>053442</strain>
    </source>
</reference>
<feature type="chain" id="PRO_1000079636" description="DNA-directed RNA polymerase subunit omega">
    <location>
        <begin position="1"/>
        <end position="68"/>
    </location>
</feature>
<dbReference type="EC" id="2.7.7.6" evidence="1"/>
<dbReference type="EMBL" id="CP000381">
    <property type="protein sequence ID" value="ABX73720.1"/>
    <property type="molecule type" value="Genomic_DNA"/>
</dbReference>
<dbReference type="RefSeq" id="WP_002216698.1">
    <property type="nucleotide sequence ID" value="NC_010120.1"/>
</dbReference>
<dbReference type="SMR" id="A9M1N1"/>
<dbReference type="KEGG" id="nmn:NMCC_1570"/>
<dbReference type="HOGENOM" id="CLU_125406_5_2_4"/>
<dbReference type="Proteomes" id="UP000001177">
    <property type="component" value="Chromosome"/>
</dbReference>
<dbReference type="GO" id="GO:0000428">
    <property type="term" value="C:DNA-directed RNA polymerase complex"/>
    <property type="evidence" value="ECO:0007669"/>
    <property type="project" value="UniProtKB-KW"/>
</dbReference>
<dbReference type="GO" id="GO:0003677">
    <property type="term" value="F:DNA binding"/>
    <property type="evidence" value="ECO:0007669"/>
    <property type="project" value="UniProtKB-UniRule"/>
</dbReference>
<dbReference type="GO" id="GO:0003899">
    <property type="term" value="F:DNA-directed RNA polymerase activity"/>
    <property type="evidence" value="ECO:0007669"/>
    <property type="project" value="UniProtKB-UniRule"/>
</dbReference>
<dbReference type="GO" id="GO:0006351">
    <property type="term" value="P:DNA-templated transcription"/>
    <property type="evidence" value="ECO:0007669"/>
    <property type="project" value="UniProtKB-UniRule"/>
</dbReference>
<dbReference type="Gene3D" id="3.90.940.10">
    <property type="match status" value="1"/>
</dbReference>
<dbReference type="HAMAP" id="MF_00366">
    <property type="entry name" value="RNApol_bact_RpoZ"/>
    <property type="match status" value="1"/>
</dbReference>
<dbReference type="InterPro" id="IPR003716">
    <property type="entry name" value="DNA-dir_RNA_pol_omega"/>
</dbReference>
<dbReference type="InterPro" id="IPR006110">
    <property type="entry name" value="Pol_omega/Rpo6/RPB6"/>
</dbReference>
<dbReference type="InterPro" id="IPR036161">
    <property type="entry name" value="RPB6/omega-like_sf"/>
</dbReference>
<dbReference type="NCBIfam" id="TIGR00690">
    <property type="entry name" value="rpoZ"/>
    <property type="match status" value="1"/>
</dbReference>
<dbReference type="PANTHER" id="PTHR34476">
    <property type="entry name" value="DNA-DIRECTED RNA POLYMERASE SUBUNIT OMEGA"/>
    <property type="match status" value="1"/>
</dbReference>
<dbReference type="PANTHER" id="PTHR34476:SF1">
    <property type="entry name" value="DNA-DIRECTED RNA POLYMERASE SUBUNIT OMEGA"/>
    <property type="match status" value="1"/>
</dbReference>
<dbReference type="Pfam" id="PF01192">
    <property type="entry name" value="RNA_pol_Rpb6"/>
    <property type="match status" value="1"/>
</dbReference>
<dbReference type="SMART" id="SM01409">
    <property type="entry name" value="RNA_pol_Rpb6"/>
    <property type="match status" value="1"/>
</dbReference>
<dbReference type="SUPFAM" id="SSF63562">
    <property type="entry name" value="RPB6/omega subunit-like"/>
    <property type="match status" value="1"/>
</dbReference>
<evidence type="ECO:0000255" key="1">
    <source>
        <dbReference type="HAMAP-Rule" id="MF_00366"/>
    </source>
</evidence>
<protein>
    <recommendedName>
        <fullName evidence="1">DNA-directed RNA polymerase subunit omega</fullName>
        <shortName evidence="1">RNAP omega subunit</shortName>
        <ecNumber evidence="1">2.7.7.6</ecNumber>
    </recommendedName>
    <alternativeName>
        <fullName evidence="1">RNA polymerase omega subunit</fullName>
    </alternativeName>
    <alternativeName>
        <fullName evidence="1">Transcriptase subunit omega</fullName>
    </alternativeName>
</protein>
<keyword id="KW-0240">DNA-directed RNA polymerase</keyword>
<keyword id="KW-0548">Nucleotidyltransferase</keyword>
<keyword id="KW-0804">Transcription</keyword>
<keyword id="KW-0808">Transferase</keyword>